<protein>
    <recommendedName>
        <fullName evidence="1">UDP-N-acetylmuramate--L-alanine ligase</fullName>
        <ecNumber evidence="1">6.3.2.8</ecNumber>
    </recommendedName>
    <alternativeName>
        <fullName evidence="1">UDP-N-acetylmuramoyl-L-alanine synthetase</fullName>
    </alternativeName>
</protein>
<sequence>MTVFHFTGIKGSGMSPLAQILFDAGEQVQGSDVDKYFFTEQPLRERNIPIFTFNADNIKEGMTVIAGNAFPDDHPELIRAREIGVEIIRYHKFLGEYIGNYISIAITGAHGKTSTTGLMAHVVGGYKPTSYLIGDGTGAGHANADFFVMEACEYRRHFLAYNPDYAVMTNIDFDHPDYFANIEDVYSAFQSLALQVKKAIIACGDDEQLQRIQAKVPVVYYGFGSENDFEARNVEKTTEGTKFDVFVRNEFYSTFFIPLFGDHAILNTLAVITLCEYEGISPDIIQDRLHTYKGVKRRFTETDIGDNVLIDDYAHHPTEIRATIQSARQKFPDRELVAIFQPHTFTRTQAFLQDFADSLSLADTAYLCDIFGSARETQGALSIQDLASLIEGSAVITTEGIDILTKHQGAVFLFMGAGDVHKFQDAFEAVLKNDETA</sequence>
<dbReference type="EC" id="6.3.2.8" evidence="1"/>
<dbReference type="EMBL" id="CP000817">
    <property type="protein sequence ID" value="ACA41666.1"/>
    <property type="molecule type" value="Genomic_DNA"/>
</dbReference>
<dbReference type="RefSeq" id="WP_012295696.1">
    <property type="nucleotide sequence ID" value="NC_010382.1"/>
</dbReference>
<dbReference type="SMR" id="B1HX90"/>
<dbReference type="EnsemblBacteria" id="ACA41666">
    <property type="protein sequence ID" value="ACA41666"/>
    <property type="gene ID" value="Bsph_4205"/>
</dbReference>
<dbReference type="KEGG" id="lsp:Bsph_4205"/>
<dbReference type="HOGENOM" id="CLU_028104_1_0_9"/>
<dbReference type="UniPathway" id="UPA00219"/>
<dbReference type="Proteomes" id="UP000002164">
    <property type="component" value="Chromosome"/>
</dbReference>
<dbReference type="GO" id="GO:0005737">
    <property type="term" value="C:cytoplasm"/>
    <property type="evidence" value="ECO:0007669"/>
    <property type="project" value="UniProtKB-SubCell"/>
</dbReference>
<dbReference type="GO" id="GO:0005524">
    <property type="term" value="F:ATP binding"/>
    <property type="evidence" value="ECO:0007669"/>
    <property type="project" value="UniProtKB-UniRule"/>
</dbReference>
<dbReference type="GO" id="GO:0008763">
    <property type="term" value="F:UDP-N-acetylmuramate-L-alanine ligase activity"/>
    <property type="evidence" value="ECO:0007669"/>
    <property type="project" value="UniProtKB-UniRule"/>
</dbReference>
<dbReference type="GO" id="GO:0051301">
    <property type="term" value="P:cell division"/>
    <property type="evidence" value="ECO:0007669"/>
    <property type="project" value="UniProtKB-KW"/>
</dbReference>
<dbReference type="GO" id="GO:0071555">
    <property type="term" value="P:cell wall organization"/>
    <property type="evidence" value="ECO:0007669"/>
    <property type="project" value="UniProtKB-KW"/>
</dbReference>
<dbReference type="GO" id="GO:0009252">
    <property type="term" value="P:peptidoglycan biosynthetic process"/>
    <property type="evidence" value="ECO:0007669"/>
    <property type="project" value="UniProtKB-UniRule"/>
</dbReference>
<dbReference type="GO" id="GO:0008360">
    <property type="term" value="P:regulation of cell shape"/>
    <property type="evidence" value="ECO:0007669"/>
    <property type="project" value="UniProtKB-KW"/>
</dbReference>
<dbReference type="Gene3D" id="3.90.190.20">
    <property type="entry name" value="Mur ligase, C-terminal domain"/>
    <property type="match status" value="1"/>
</dbReference>
<dbReference type="Gene3D" id="3.40.1190.10">
    <property type="entry name" value="Mur-like, catalytic domain"/>
    <property type="match status" value="1"/>
</dbReference>
<dbReference type="Gene3D" id="3.40.50.720">
    <property type="entry name" value="NAD(P)-binding Rossmann-like Domain"/>
    <property type="match status" value="1"/>
</dbReference>
<dbReference type="HAMAP" id="MF_00046">
    <property type="entry name" value="MurC"/>
    <property type="match status" value="1"/>
</dbReference>
<dbReference type="InterPro" id="IPR036565">
    <property type="entry name" value="Mur-like_cat_sf"/>
</dbReference>
<dbReference type="InterPro" id="IPR004101">
    <property type="entry name" value="Mur_ligase_C"/>
</dbReference>
<dbReference type="InterPro" id="IPR036615">
    <property type="entry name" value="Mur_ligase_C_dom_sf"/>
</dbReference>
<dbReference type="InterPro" id="IPR013221">
    <property type="entry name" value="Mur_ligase_cen"/>
</dbReference>
<dbReference type="InterPro" id="IPR000713">
    <property type="entry name" value="Mur_ligase_N"/>
</dbReference>
<dbReference type="InterPro" id="IPR050061">
    <property type="entry name" value="MurCDEF_pg_biosynth"/>
</dbReference>
<dbReference type="InterPro" id="IPR005758">
    <property type="entry name" value="UDP-N-AcMur_Ala_ligase_MurC"/>
</dbReference>
<dbReference type="NCBIfam" id="TIGR01082">
    <property type="entry name" value="murC"/>
    <property type="match status" value="1"/>
</dbReference>
<dbReference type="PANTHER" id="PTHR43445:SF3">
    <property type="entry name" value="UDP-N-ACETYLMURAMATE--L-ALANINE LIGASE"/>
    <property type="match status" value="1"/>
</dbReference>
<dbReference type="PANTHER" id="PTHR43445">
    <property type="entry name" value="UDP-N-ACETYLMURAMATE--L-ALANINE LIGASE-RELATED"/>
    <property type="match status" value="1"/>
</dbReference>
<dbReference type="Pfam" id="PF01225">
    <property type="entry name" value="Mur_ligase"/>
    <property type="match status" value="1"/>
</dbReference>
<dbReference type="Pfam" id="PF02875">
    <property type="entry name" value="Mur_ligase_C"/>
    <property type="match status" value="1"/>
</dbReference>
<dbReference type="Pfam" id="PF08245">
    <property type="entry name" value="Mur_ligase_M"/>
    <property type="match status" value="1"/>
</dbReference>
<dbReference type="SUPFAM" id="SSF51984">
    <property type="entry name" value="MurCD N-terminal domain"/>
    <property type="match status" value="1"/>
</dbReference>
<dbReference type="SUPFAM" id="SSF53623">
    <property type="entry name" value="MurD-like peptide ligases, catalytic domain"/>
    <property type="match status" value="1"/>
</dbReference>
<dbReference type="SUPFAM" id="SSF53244">
    <property type="entry name" value="MurD-like peptide ligases, peptide-binding domain"/>
    <property type="match status" value="1"/>
</dbReference>
<name>MURC_LYSSC</name>
<evidence type="ECO:0000255" key="1">
    <source>
        <dbReference type="HAMAP-Rule" id="MF_00046"/>
    </source>
</evidence>
<reference key="1">
    <citation type="journal article" date="2008" name="J. Bacteriol.">
        <title>Complete genome sequence of the mosquitocidal bacterium Bacillus sphaericus C3-41 and comparison with those of closely related Bacillus species.</title>
        <authorList>
            <person name="Hu X."/>
            <person name="Fan W."/>
            <person name="Han B."/>
            <person name="Liu H."/>
            <person name="Zheng D."/>
            <person name="Li Q."/>
            <person name="Dong W."/>
            <person name="Yan J."/>
            <person name="Gao M."/>
            <person name="Berry C."/>
            <person name="Yuan Z."/>
        </authorList>
    </citation>
    <scope>NUCLEOTIDE SEQUENCE [LARGE SCALE GENOMIC DNA]</scope>
    <source>
        <strain>C3-41</strain>
    </source>
</reference>
<comment type="function">
    <text evidence="1">Cell wall formation.</text>
</comment>
<comment type="catalytic activity">
    <reaction evidence="1">
        <text>UDP-N-acetyl-alpha-D-muramate + L-alanine + ATP = UDP-N-acetyl-alpha-D-muramoyl-L-alanine + ADP + phosphate + H(+)</text>
        <dbReference type="Rhea" id="RHEA:23372"/>
        <dbReference type="ChEBI" id="CHEBI:15378"/>
        <dbReference type="ChEBI" id="CHEBI:30616"/>
        <dbReference type="ChEBI" id="CHEBI:43474"/>
        <dbReference type="ChEBI" id="CHEBI:57972"/>
        <dbReference type="ChEBI" id="CHEBI:70757"/>
        <dbReference type="ChEBI" id="CHEBI:83898"/>
        <dbReference type="ChEBI" id="CHEBI:456216"/>
        <dbReference type="EC" id="6.3.2.8"/>
    </reaction>
</comment>
<comment type="pathway">
    <text evidence="1">Cell wall biogenesis; peptidoglycan biosynthesis.</text>
</comment>
<comment type="subcellular location">
    <subcellularLocation>
        <location evidence="1">Cytoplasm</location>
    </subcellularLocation>
</comment>
<comment type="similarity">
    <text evidence="1">Belongs to the MurCDEF family.</text>
</comment>
<proteinExistence type="inferred from homology"/>
<keyword id="KW-0067">ATP-binding</keyword>
<keyword id="KW-0131">Cell cycle</keyword>
<keyword id="KW-0132">Cell division</keyword>
<keyword id="KW-0133">Cell shape</keyword>
<keyword id="KW-0961">Cell wall biogenesis/degradation</keyword>
<keyword id="KW-0963">Cytoplasm</keyword>
<keyword id="KW-0436">Ligase</keyword>
<keyword id="KW-0547">Nucleotide-binding</keyword>
<keyword id="KW-0573">Peptidoglycan synthesis</keyword>
<organism>
    <name type="scientific">Lysinibacillus sphaericus (strain C3-41)</name>
    <dbReference type="NCBI Taxonomy" id="444177"/>
    <lineage>
        <taxon>Bacteria</taxon>
        <taxon>Bacillati</taxon>
        <taxon>Bacillota</taxon>
        <taxon>Bacilli</taxon>
        <taxon>Bacillales</taxon>
        <taxon>Bacillaceae</taxon>
        <taxon>Lysinibacillus</taxon>
    </lineage>
</organism>
<gene>
    <name evidence="1" type="primary">murC</name>
    <name type="ordered locus">Bsph_4205</name>
</gene>
<feature type="chain" id="PRO_1000091113" description="UDP-N-acetylmuramate--L-alanine ligase">
    <location>
        <begin position="1"/>
        <end position="437"/>
    </location>
</feature>
<feature type="binding site" evidence="1">
    <location>
        <begin position="108"/>
        <end position="114"/>
    </location>
    <ligand>
        <name>ATP</name>
        <dbReference type="ChEBI" id="CHEBI:30616"/>
    </ligand>
</feature>
<accession>B1HX90</accession>